<sequence>MQTQLTEEMRQNARALEADSILRACVHCGFCTATCPTYQLLGDELDGPRGRIYLIKQVLEGNEVTLKTQEHLDRCLTCRNCETTCPSGVRYHNLLDIGRDIVEQKVKRPLPERILREGLRQVVPRPAVFRALTQVGLVLRPFLPEQVRAKLPAETVKAKPRPPLRHKRRVLMLEGCAQPTLSPNTNAATARVLDRLGISVMPANEAGCCGAVDYHLNAQEKGLARARNNIDAWWPAIEAGAEAILQTASGCGAFVKEYGQMLKNDALYADKARQVSELAVDLVELLREEPLEKLAIRGDKKLAFHCPCTLQHAQKLNGEVEKVLLRLGFTLTDVPDSHLCCGSAGTYALTHPDLARQLRDNKMNALESGKPEMIVTANIGCQTHLASAGRTSVRHWIEIVEQALEKE</sequence>
<dbReference type="EC" id="1.1.99.14" evidence="3 9"/>
<dbReference type="EMBL" id="L43490">
    <property type="protein sequence ID" value="AAB02532.1"/>
    <property type="molecule type" value="Genomic_DNA"/>
</dbReference>
<dbReference type="EMBL" id="U28377">
    <property type="protein sequence ID" value="AAA69145.1"/>
    <property type="status" value="ALT_INIT"/>
    <property type="molecule type" value="Genomic_DNA"/>
</dbReference>
<dbReference type="EMBL" id="U00096">
    <property type="protein sequence ID" value="AAT48157.1"/>
    <property type="molecule type" value="Genomic_DNA"/>
</dbReference>
<dbReference type="EMBL" id="AP009048">
    <property type="protein sequence ID" value="BAE77038.1"/>
    <property type="molecule type" value="Genomic_DNA"/>
</dbReference>
<dbReference type="RefSeq" id="WP_001194661.1">
    <property type="nucleotide sequence ID" value="NZ_SSUV01000003.1"/>
</dbReference>
<dbReference type="RefSeq" id="YP_026190.1">
    <property type="nucleotide sequence ID" value="NC_000913.3"/>
</dbReference>
<dbReference type="SMR" id="P52074"/>
<dbReference type="BioGRID" id="4262366">
    <property type="interactions" value="15"/>
</dbReference>
<dbReference type="FunCoup" id="P52074">
    <property type="interactions" value="177"/>
</dbReference>
<dbReference type="STRING" id="511145.b4467"/>
<dbReference type="jPOST" id="P52074"/>
<dbReference type="PaxDb" id="511145-b4467"/>
<dbReference type="EnsemblBacteria" id="AAT48157">
    <property type="protein sequence ID" value="AAT48157"/>
    <property type="gene ID" value="b4467"/>
</dbReference>
<dbReference type="GeneID" id="2847717"/>
<dbReference type="GeneID" id="75173103"/>
<dbReference type="KEGG" id="ecj:JW5486"/>
<dbReference type="KEGG" id="eco:b4467"/>
<dbReference type="KEGG" id="ecoc:C3026_16290"/>
<dbReference type="PATRIC" id="fig|1411691.4.peg.3753"/>
<dbReference type="EchoBASE" id="EB3076"/>
<dbReference type="eggNOG" id="COG0247">
    <property type="taxonomic scope" value="Bacteria"/>
</dbReference>
<dbReference type="HOGENOM" id="CLU_023081_0_0_6"/>
<dbReference type="InParanoid" id="P52074"/>
<dbReference type="OMA" id="VYQDACH"/>
<dbReference type="OrthoDB" id="9765258at2"/>
<dbReference type="PhylomeDB" id="P52074"/>
<dbReference type="BioCyc" id="EcoCyc:MONOMER0-561"/>
<dbReference type="BioCyc" id="MetaCyc:MONOMER0-561"/>
<dbReference type="PRO" id="PR:P52074"/>
<dbReference type="Proteomes" id="UP000000625">
    <property type="component" value="Chromosome"/>
</dbReference>
<dbReference type="GO" id="GO:0005886">
    <property type="term" value="C:plasma membrane"/>
    <property type="evidence" value="ECO:0000314"/>
    <property type="project" value="EcoCyc"/>
</dbReference>
<dbReference type="GO" id="GO:0051539">
    <property type="term" value="F:4 iron, 4 sulfur cluster binding"/>
    <property type="evidence" value="ECO:0007669"/>
    <property type="project" value="UniProtKB-KW"/>
</dbReference>
<dbReference type="GO" id="GO:0047809">
    <property type="term" value="F:D-2-hydroxy-acid dehydrogenase activity"/>
    <property type="evidence" value="ECO:0007669"/>
    <property type="project" value="RHEA"/>
</dbReference>
<dbReference type="GO" id="GO:0019154">
    <property type="term" value="F:glycolate dehydrogenase activity"/>
    <property type="evidence" value="ECO:0000315"/>
    <property type="project" value="EcoCyc"/>
</dbReference>
<dbReference type="GO" id="GO:0046872">
    <property type="term" value="F:metal ion binding"/>
    <property type="evidence" value="ECO:0007669"/>
    <property type="project" value="UniProtKB-KW"/>
</dbReference>
<dbReference type="GO" id="GO:0046296">
    <property type="term" value="P:glycolate catabolic process"/>
    <property type="evidence" value="ECO:0000315"/>
    <property type="project" value="EcoCyc"/>
</dbReference>
<dbReference type="FunFam" id="1.10.1060.10:FF:000012">
    <property type="entry name" value="Glycolate oxidase iron-sulfur subunit"/>
    <property type="match status" value="1"/>
</dbReference>
<dbReference type="Gene3D" id="1.10.1060.10">
    <property type="entry name" value="Alpha-helical ferredoxin"/>
    <property type="match status" value="1"/>
</dbReference>
<dbReference type="InterPro" id="IPR017896">
    <property type="entry name" value="4Fe4S_Fe-S-bd"/>
</dbReference>
<dbReference type="InterPro" id="IPR017900">
    <property type="entry name" value="4Fe4S_Fe_S_CS"/>
</dbReference>
<dbReference type="InterPro" id="IPR004017">
    <property type="entry name" value="Cys_rich_dom"/>
</dbReference>
<dbReference type="InterPro" id="IPR012257">
    <property type="entry name" value="Glc_ox_4Fe-4S"/>
</dbReference>
<dbReference type="InterPro" id="IPR009051">
    <property type="entry name" value="Helical_ferredxn"/>
</dbReference>
<dbReference type="NCBIfam" id="NF008434">
    <property type="entry name" value="PRK11274.1"/>
    <property type="match status" value="1"/>
</dbReference>
<dbReference type="PANTHER" id="PTHR32479">
    <property type="entry name" value="GLYCOLATE OXIDASE IRON-SULFUR SUBUNIT"/>
    <property type="match status" value="1"/>
</dbReference>
<dbReference type="PANTHER" id="PTHR32479:SF17">
    <property type="entry name" value="GLYCOLATE OXIDASE IRON-SULFUR SUBUNIT"/>
    <property type="match status" value="1"/>
</dbReference>
<dbReference type="Pfam" id="PF02754">
    <property type="entry name" value="CCG"/>
    <property type="match status" value="2"/>
</dbReference>
<dbReference type="Pfam" id="PF13183">
    <property type="entry name" value="Fer4_8"/>
    <property type="match status" value="1"/>
</dbReference>
<dbReference type="PIRSF" id="PIRSF000139">
    <property type="entry name" value="Glc_ox_4Fe-4S"/>
    <property type="match status" value="1"/>
</dbReference>
<dbReference type="SUPFAM" id="SSF54862">
    <property type="entry name" value="4Fe-4S ferredoxins"/>
    <property type="match status" value="1"/>
</dbReference>
<dbReference type="PROSITE" id="PS00198">
    <property type="entry name" value="4FE4S_FER_1"/>
    <property type="match status" value="2"/>
</dbReference>
<dbReference type="PROSITE" id="PS51379">
    <property type="entry name" value="4FE4S_FER_2"/>
    <property type="match status" value="2"/>
</dbReference>
<comment type="function">
    <text evidence="3 4">Component of a complex that catalyzes the oxidation of glycolate to glyoxylate (PubMed:4557653, PubMed:8606183). Is required for E.coli to grow on glycolate as a sole source of carbon (PubMed:8606183). Is also able to oxidize D-lactate ((R)-lactate) with a similar rate (PubMed:4557653). Does not link directly to O(2), and 2,6-dichloroindophenol (DCIP) and phenazine methosulfate (PMS) can act as artificial electron acceptors in vitro, but the physiological molecule that functions as a primary electron acceptor during glycolate oxidation is unknown (PubMed:4557653).</text>
</comment>
<comment type="catalytic activity">
    <reaction evidence="3 9">
        <text>glycolate + A = glyoxylate + AH2</text>
        <dbReference type="Rhea" id="RHEA:21264"/>
        <dbReference type="ChEBI" id="CHEBI:13193"/>
        <dbReference type="ChEBI" id="CHEBI:17499"/>
        <dbReference type="ChEBI" id="CHEBI:29805"/>
        <dbReference type="ChEBI" id="CHEBI:36655"/>
        <dbReference type="EC" id="1.1.99.14"/>
    </reaction>
    <physiologicalReaction direction="left-to-right" evidence="4 8">
        <dbReference type="Rhea" id="RHEA:21265"/>
    </physiologicalReaction>
</comment>
<comment type="catalytic activity">
    <reaction evidence="3">
        <text>(R)-lactate + A = pyruvate + AH2</text>
        <dbReference type="Rhea" id="RHEA:15089"/>
        <dbReference type="ChEBI" id="CHEBI:13193"/>
        <dbReference type="ChEBI" id="CHEBI:15361"/>
        <dbReference type="ChEBI" id="CHEBI:16004"/>
        <dbReference type="ChEBI" id="CHEBI:17499"/>
    </reaction>
</comment>
<comment type="cofactor">
    <cofactor evidence="1">
        <name>[4Fe-4S] cluster</name>
        <dbReference type="ChEBI" id="CHEBI:49883"/>
    </cofactor>
    <text evidence="1">Binds 2 [4Fe-4S] clusters.</text>
</comment>
<comment type="activity regulation">
    <text evidence="3">In vitro the glycolate oxidase activity is inhibited by the sulfhydryl inhibitors CuSO4 and PCMB, by KCN, but not by the metal complexing agent EDTA.</text>
</comment>
<comment type="biophysicochemical properties">
    <kinetics>
        <KM evidence="3">40 uM for glycolate</KM>
        <KM evidence="3">0.7 mM for D-lactate</KM>
        <text evidence="8">Parameters measured from a partially purified enzyme from extracts of glycolate grown cells.</text>
    </kinetics>
    <phDependence>
        <text evidence="3">Optimum pH is 8.0-8.8.</text>
    </phDependence>
</comment>
<comment type="subunit">
    <text evidence="4">The glycolate oxidase likely consists of three subunits, GlcD, GlcE and GlcF.</text>
</comment>
<comment type="subcellular location">
    <subcellularLocation>
        <location evidence="2 9">Cell inner membrane</location>
    </subcellularLocation>
    <text evidence="2 4">Glycolate oxidoreductase activity was shown to be firmly associated with the cytoplasmic membranes (PubMed:2689218). And the GlcF subunit itself could only be detected in the membrane fraction (PubMed:8606183).</text>
</comment>
<comment type="induction">
    <text evidence="5">Part of the glcDEFGB operon, which is induced by growth on glycolate, under the positive control of GlcC. Also induced by growth on acetate. Expression of the glc operon is strongly dependent on the integration host factor (IHF) and is repressed by the global respiratory regulator ArcA-P.</text>
</comment>
<comment type="disruption phenotype">
    <text evidence="4">Abolishes glycolate oxidase activity. Is unable to grow on glycolate as the sole source of carbon, in contrast to wild type.</text>
</comment>
<comment type="sequence caution" evidence="7">
    <conflict type="erroneous initiation">
        <sequence resource="EMBL-CDS" id="AAA69145"/>
    </conflict>
</comment>
<feature type="chain" id="PRO_0000159258" description="Glycolate oxidase iron-sulfur subunit">
    <location>
        <begin position="1"/>
        <end position="407"/>
    </location>
</feature>
<feature type="domain" description="4Fe-4S ferredoxin-type 1" evidence="1">
    <location>
        <begin position="14"/>
        <end position="47"/>
    </location>
</feature>
<feature type="domain" description="4Fe-4S ferredoxin-type 2" evidence="1">
    <location>
        <begin position="66"/>
        <end position="95"/>
    </location>
</feature>
<feature type="binding site" evidence="1">
    <location>
        <position position="25"/>
    </location>
    <ligand>
        <name>[4Fe-4S] cluster</name>
        <dbReference type="ChEBI" id="CHEBI:49883"/>
        <label>1</label>
    </ligand>
</feature>
<feature type="binding site" evidence="1">
    <location>
        <position position="28"/>
    </location>
    <ligand>
        <name>[4Fe-4S] cluster</name>
        <dbReference type="ChEBI" id="CHEBI:49883"/>
        <label>1</label>
    </ligand>
</feature>
<feature type="binding site" evidence="1">
    <location>
        <position position="31"/>
    </location>
    <ligand>
        <name>[4Fe-4S] cluster</name>
        <dbReference type="ChEBI" id="CHEBI:49883"/>
        <label>1</label>
    </ligand>
</feature>
<feature type="binding site" evidence="1">
    <location>
        <position position="35"/>
    </location>
    <ligand>
        <name>[4Fe-4S] cluster</name>
        <dbReference type="ChEBI" id="CHEBI:49883"/>
        <label>2</label>
    </ligand>
</feature>
<feature type="binding site" evidence="1">
    <location>
        <position position="75"/>
    </location>
    <ligand>
        <name>[4Fe-4S] cluster</name>
        <dbReference type="ChEBI" id="CHEBI:49883"/>
        <label>2</label>
    </ligand>
</feature>
<feature type="binding site" evidence="1">
    <location>
        <position position="78"/>
    </location>
    <ligand>
        <name>[4Fe-4S] cluster</name>
        <dbReference type="ChEBI" id="CHEBI:49883"/>
        <label>2</label>
    </ligand>
</feature>
<feature type="binding site" evidence="1">
    <location>
        <position position="81"/>
    </location>
    <ligand>
        <name>[4Fe-4S] cluster</name>
        <dbReference type="ChEBI" id="CHEBI:49883"/>
        <label>2</label>
    </ligand>
</feature>
<feature type="binding site" evidence="1">
    <location>
        <position position="85"/>
    </location>
    <ligand>
        <name>[4Fe-4S] cluster</name>
        <dbReference type="ChEBI" id="CHEBI:49883"/>
        <label>1</label>
    </ligand>
</feature>
<evidence type="ECO:0000255" key="1">
    <source>
        <dbReference type="PROSITE-ProRule" id="PRU00711"/>
    </source>
</evidence>
<evidence type="ECO:0000269" key="2">
    <source>
    </source>
</evidence>
<evidence type="ECO:0000269" key="3">
    <source>
    </source>
</evidence>
<evidence type="ECO:0000269" key="4">
    <source>
    </source>
</evidence>
<evidence type="ECO:0000269" key="5">
    <source>
    </source>
</evidence>
<evidence type="ECO:0000303" key="6">
    <source>
    </source>
</evidence>
<evidence type="ECO:0000305" key="7"/>
<evidence type="ECO:0000305" key="8">
    <source>
    </source>
</evidence>
<evidence type="ECO:0000305" key="9">
    <source>
    </source>
</evidence>
<reference key="1">
    <citation type="journal article" date="1996" name="J. Bacteriol.">
        <title>glc locus of Escherichia coli: characterization of genes encoding the subunits of glycolate oxidase and the glc regulator protein.</title>
        <authorList>
            <person name="Pellicer M.T."/>
            <person name="Badia J."/>
            <person name="Aguilar J.T."/>
            <person name="Baldoma L."/>
        </authorList>
    </citation>
    <scope>NUCLEOTIDE SEQUENCE [GENOMIC DNA]</scope>
    <scope>FUNCTION</scope>
    <scope>DISRUPTION PHENOTYPE</scope>
    <scope>SUBCELLULAR LOCATION</scope>
    <scope>SUBUNIT</scope>
    <source>
        <strain>K12 / W3110 / ATCC 27325 / DSM 5911</strain>
    </source>
</reference>
<reference key="2">
    <citation type="journal article" date="1997" name="Science">
        <title>The complete genome sequence of Escherichia coli K-12.</title>
        <authorList>
            <person name="Blattner F.R."/>
            <person name="Plunkett G. III"/>
            <person name="Bloch C.A."/>
            <person name="Perna N.T."/>
            <person name="Burland V."/>
            <person name="Riley M."/>
            <person name="Collado-Vides J."/>
            <person name="Glasner J.D."/>
            <person name="Rode C.K."/>
            <person name="Mayhew G.F."/>
            <person name="Gregor J."/>
            <person name="Davis N.W."/>
            <person name="Kirkpatrick H.A."/>
            <person name="Goeden M.A."/>
            <person name="Rose D.J."/>
            <person name="Mau B."/>
            <person name="Shao Y."/>
        </authorList>
    </citation>
    <scope>NUCLEOTIDE SEQUENCE [LARGE SCALE GENOMIC DNA]</scope>
    <source>
        <strain>K12 / MG1655 / ATCC 47076</strain>
    </source>
</reference>
<reference key="3">
    <citation type="journal article" date="2006" name="Nucleic Acids Res.">
        <title>Escherichia coli K-12: a cooperatively developed annotation snapshot -- 2005.</title>
        <authorList>
            <person name="Riley M."/>
            <person name="Abe T."/>
            <person name="Arnaud M.B."/>
            <person name="Berlyn M.K.B."/>
            <person name="Blattner F.R."/>
            <person name="Chaudhuri R.R."/>
            <person name="Glasner J.D."/>
            <person name="Horiuchi T."/>
            <person name="Keseler I.M."/>
            <person name="Kosuge T."/>
            <person name="Mori H."/>
            <person name="Perna N.T."/>
            <person name="Plunkett G. III"/>
            <person name="Rudd K.E."/>
            <person name="Serres M.H."/>
            <person name="Thomas G.H."/>
            <person name="Thomson N.R."/>
            <person name="Wishart D."/>
            <person name="Wanner B.L."/>
        </authorList>
    </citation>
    <scope>SEQUENCE REVISION</scope>
</reference>
<reference key="4">
    <citation type="journal article" date="2006" name="Mol. Syst. Biol.">
        <title>Highly accurate genome sequences of Escherichia coli K-12 strains MG1655 and W3110.</title>
        <authorList>
            <person name="Hayashi K."/>
            <person name="Morooka N."/>
            <person name="Yamamoto Y."/>
            <person name="Fujita K."/>
            <person name="Isono K."/>
            <person name="Choi S."/>
            <person name="Ohtsubo E."/>
            <person name="Baba T."/>
            <person name="Wanner B.L."/>
            <person name="Mori H."/>
            <person name="Horiuchi T."/>
        </authorList>
    </citation>
    <scope>NUCLEOTIDE SEQUENCE [LARGE SCALE GENOMIC DNA]</scope>
    <source>
        <strain>K12 / W3110 / ATCC 27325 / DSM 5911</strain>
    </source>
</reference>
<reference key="5">
    <citation type="journal article" date="1972" name="Biochim. Biophys. Acta">
        <title>Glycolate oxidoreductase in Escherichia coli.</title>
        <authorList>
            <person name="Lord J.M."/>
        </authorList>
    </citation>
    <scope>FUNCTION</scope>
    <scope>CATALYTIC ACTIVITY</scope>
    <scope>BIOPHYSICOCHEMICAL PROPERTIES</scope>
    <scope>ACTIVITY REGULATION</scope>
    <source>
        <strain>K12</strain>
    </source>
</reference>
<reference key="6">
    <citation type="journal article" date="1989" name="FEBS Lett.">
        <title>The intracellular localization of glycolate oxidoreductase in Escherichia coli.</title>
        <authorList>
            <person name="Sallal A.K."/>
            <person name="Nimer N.A."/>
        </authorList>
    </citation>
    <scope>SUBCELLULAR LOCATION</scope>
    <source>
        <strain>ATCC 11775</strain>
    </source>
</reference>
<reference key="7">
    <citation type="journal article" date="1999" name="J. Biol. Chem.">
        <title>Cross-induction of glc and ace operons of Escherichia coli attributable to pathway intersection. Characterization of the glc promoter.</title>
        <authorList>
            <person name="Pellicer M.T."/>
            <person name="Fernandez C."/>
            <person name="Badia J."/>
            <person name="Aguilar J."/>
            <person name="Lin E.C."/>
            <person name="Baldom L."/>
        </authorList>
    </citation>
    <scope>INDUCTION</scope>
    <source>
        <strain>K12 / MC4100</strain>
    </source>
</reference>
<proteinExistence type="evidence at protein level"/>
<gene>
    <name evidence="6" type="primary">glcF</name>
    <name type="synonym">gox</name>
    <name type="synonym">yghL</name>
    <name type="ordered locus">b4467</name>
    <name type="ordered locus">JW5486</name>
</gene>
<keyword id="KW-0004">4Fe-4S</keyword>
<keyword id="KW-0997">Cell inner membrane</keyword>
<keyword id="KW-1003">Cell membrane</keyword>
<keyword id="KW-0249">Electron transport</keyword>
<keyword id="KW-0408">Iron</keyword>
<keyword id="KW-0411">Iron-sulfur</keyword>
<keyword id="KW-0472">Membrane</keyword>
<keyword id="KW-0479">Metal-binding</keyword>
<keyword id="KW-0560">Oxidoreductase</keyword>
<keyword id="KW-1185">Reference proteome</keyword>
<keyword id="KW-0677">Repeat</keyword>
<keyword id="KW-0813">Transport</keyword>
<name>GLCF_ECOLI</name>
<organism>
    <name type="scientific">Escherichia coli (strain K12)</name>
    <dbReference type="NCBI Taxonomy" id="83333"/>
    <lineage>
        <taxon>Bacteria</taxon>
        <taxon>Pseudomonadati</taxon>
        <taxon>Pseudomonadota</taxon>
        <taxon>Gammaproteobacteria</taxon>
        <taxon>Enterobacterales</taxon>
        <taxon>Enterobacteriaceae</taxon>
        <taxon>Escherichia</taxon>
    </lineage>
</organism>
<accession>P52074</accession>
<accession>P76654</accession>
<accession>Q2M9L8</accession>
<protein>
    <recommendedName>
        <fullName evidence="9">Glycolate oxidase iron-sulfur subunit</fullName>
        <ecNumber evidence="3 9">1.1.99.14</ecNumber>
    </recommendedName>
    <alternativeName>
        <fullName>Glycolate dehydrogenase subunit GlcF</fullName>
    </alternativeName>
    <alternativeName>
        <fullName evidence="9">Glycolate oxidase subunit GlcF</fullName>
    </alternativeName>
</protein>